<feature type="chain" id="PRO_0000158820" description="Adenylate kinase">
    <location>
        <begin position="1"/>
        <end position="217"/>
    </location>
</feature>
<feature type="region of interest" description="NMP" evidence="1">
    <location>
        <begin position="30"/>
        <end position="59"/>
    </location>
</feature>
<feature type="region of interest" description="LID" evidence="1">
    <location>
        <begin position="126"/>
        <end position="163"/>
    </location>
</feature>
<feature type="binding site" evidence="1">
    <location>
        <begin position="10"/>
        <end position="15"/>
    </location>
    <ligand>
        <name>ATP</name>
        <dbReference type="ChEBI" id="CHEBI:30616"/>
    </ligand>
</feature>
<feature type="binding site" evidence="1">
    <location>
        <position position="31"/>
    </location>
    <ligand>
        <name>AMP</name>
        <dbReference type="ChEBI" id="CHEBI:456215"/>
    </ligand>
</feature>
<feature type="binding site" evidence="1">
    <location>
        <position position="36"/>
    </location>
    <ligand>
        <name>AMP</name>
        <dbReference type="ChEBI" id="CHEBI:456215"/>
    </ligand>
</feature>
<feature type="binding site" evidence="1">
    <location>
        <begin position="57"/>
        <end position="59"/>
    </location>
    <ligand>
        <name>AMP</name>
        <dbReference type="ChEBI" id="CHEBI:456215"/>
    </ligand>
</feature>
<feature type="binding site" evidence="1">
    <location>
        <begin position="85"/>
        <end position="88"/>
    </location>
    <ligand>
        <name>AMP</name>
        <dbReference type="ChEBI" id="CHEBI:456215"/>
    </ligand>
</feature>
<feature type="binding site" evidence="1">
    <location>
        <position position="92"/>
    </location>
    <ligand>
        <name>AMP</name>
        <dbReference type="ChEBI" id="CHEBI:456215"/>
    </ligand>
</feature>
<feature type="binding site" evidence="1">
    <location>
        <position position="127"/>
    </location>
    <ligand>
        <name>ATP</name>
        <dbReference type="ChEBI" id="CHEBI:30616"/>
    </ligand>
</feature>
<feature type="binding site" evidence="1">
    <location>
        <position position="130"/>
    </location>
    <ligand>
        <name>Zn(2+)</name>
        <dbReference type="ChEBI" id="CHEBI:29105"/>
        <note>structural</note>
    </ligand>
</feature>
<feature type="binding site" evidence="1">
    <location>
        <position position="133"/>
    </location>
    <ligand>
        <name>Zn(2+)</name>
        <dbReference type="ChEBI" id="CHEBI:29105"/>
        <note>structural</note>
    </ligand>
</feature>
<feature type="binding site" evidence="1">
    <location>
        <begin position="136"/>
        <end position="137"/>
    </location>
    <ligand>
        <name>ATP</name>
        <dbReference type="ChEBI" id="CHEBI:30616"/>
    </ligand>
</feature>
<feature type="binding site" evidence="1">
    <location>
        <position position="150"/>
    </location>
    <ligand>
        <name>Zn(2+)</name>
        <dbReference type="ChEBI" id="CHEBI:29105"/>
        <note>structural</note>
    </ligand>
</feature>
<feature type="binding site" evidence="1">
    <location>
        <position position="153"/>
    </location>
    <ligand>
        <name>Zn(2+)</name>
        <dbReference type="ChEBI" id="CHEBI:29105"/>
        <note>structural</note>
    </ligand>
</feature>
<feature type="binding site" evidence="1">
    <location>
        <position position="160"/>
    </location>
    <ligand>
        <name>AMP</name>
        <dbReference type="ChEBI" id="CHEBI:456215"/>
    </ligand>
</feature>
<feature type="binding site" evidence="1">
    <location>
        <position position="171"/>
    </location>
    <ligand>
        <name>AMP</name>
        <dbReference type="ChEBI" id="CHEBI:456215"/>
    </ligand>
</feature>
<feature type="binding site" evidence="1">
    <location>
        <position position="199"/>
    </location>
    <ligand>
        <name>ATP</name>
        <dbReference type="ChEBI" id="CHEBI:30616"/>
    </ligand>
</feature>
<proteinExistence type="inferred from homology"/>
<keyword id="KW-0067">ATP-binding</keyword>
<keyword id="KW-0963">Cytoplasm</keyword>
<keyword id="KW-0418">Kinase</keyword>
<keyword id="KW-0479">Metal-binding</keyword>
<keyword id="KW-0545">Nucleotide biosynthesis</keyword>
<keyword id="KW-0547">Nucleotide-binding</keyword>
<keyword id="KW-0808">Transferase</keyword>
<keyword id="KW-0862">Zinc</keyword>
<sequence length="217" mass="24910">MILILLGPPGIGKGTQASVLSDILKINHIATGDIFRKNFKENTELGILIKKIIAQGLLVPDDITNQMIADYLSKDIATKDFLLDGFPRNVLQARFLDDFFKNSHLFLTKVIYFNAGTQDLMKRIVGRRICPECGKVYHIENIPPKTPGICDKDQKTLIQREDDKPETFLKRLKVFNQETLPLVQYYREQNQLFEVDGMQNIDQVTKMILEVLETDRK</sequence>
<protein>
    <recommendedName>
        <fullName evidence="1">Adenylate kinase</fullName>
        <shortName evidence="1">AK</shortName>
        <ecNumber evidence="1">2.7.4.3</ecNumber>
    </recommendedName>
    <alternativeName>
        <fullName evidence="1">ATP-AMP transphosphorylase</fullName>
    </alternativeName>
    <alternativeName>
        <fullName evidence="1">ATP:AMP phosphotransferase</fullName>
    </alternativeName>
    <alternativeName>
        <fullName evidence="1">Adenylate monophosphate kinase</fullName>
    </alternativeName>
</protein>
<comment type="function">
    <text evidence="1">Catalyzes the reversible transfer of the terminal phosphate group between ATP and AMP. Plays an important role in cellular energy homeostasis and in adenine nucleotide metabolism.</text>
</comment>
<comment type="catalytic activity">
    <reaction evidence="1">
        <text>AMP + ATP = 2 ADP</text>
        <dbReference type="Rhea" id="RHEA:12973"/>
        <dbReference type="ChEBI" id="CHEBI:30616"/>
        <dbReference type="ChEBI" id="CHEBI:456215"/>
        <dbReference type="ChEBI" id="CHEBI:456216"/>
        <dbReference type="EC" id="2.7.4.3"/>
    </reaction>
</comment>
<comment type="pathway">
    <text evidence="1">Purine metabolism; AMP biosynthesis via salvage pathway; AMP from ADP: step 1/1.</text>
</comment>
<comment type="subunit">
    <text evidence="1">Monomer.</text>
</comment>
<comment type="subcellular location">
    <subcellularLocation>
        <location evidence="1">Cytoplasm</location>
    </subcellularLocation>
</comment>
<comment type="domain">
    <text evidence="1">Consists of three domains, a large central CORE domain and two small peripheral domains, NMPbind and LID, which undergo movements during catalysis. The LID domain closes over the site of phosphoryl transfer upon ATP binding. Assembling and dissambling the active center during each catalytic cycle provides an effective means to prevent ATP hydrolysis. Some bacteria have evolved a zinc-coordinating structure that stabilizes the LID domain.</text>
</comment>
<comment type="similarity">
    <text evidence="1">Belongs to the adenylate kinase family.</text>
</comment>
<name>KAD_ONYPE</name>
<organism>
    <name type="scientific">Onion yellows phytoplasma (strain OY-M)</name>
    <dbReference type="NCBI Taxonomy" id="262768"/>
    <lineage>
        <taxon>Bacteria</taxon>
        <taxon>Bacillati</taxon>
        <taxon>Mycoplasmatota</taxon>
        <taxon>Mollicutes</taxon>
        <taxon>Acholeplasmatales</taxon>
        <taxon>Acholeplasmataceae</taxon>
        <taxon>Candidatus Phytoplasma</taxon>
        <taxon>16SrI (Aster yellows group)</taxon>
    </lineage>
</organism>
<accession>Q6YR01</accession>
<gene>
    <name evidence="1" type="primary">adk</name>
    <name type="ordered locus">PAM_221</name>
</gene>
<reference key="1">
    <citation type="journal article" date="2004" name="Nat. Genet.">
        <title>Reductive evolution suggested from the complete genome sequence of a plant-pathogenic phytoplasma.</title>
        <authorList>
            <person name="Oshima K."/>
            <person name="Kakizawa S."/>
            <person name="Nishigawa H."/>
            <person name="Jung H.-Y."/>
            <person name="Wei W."/>
            <person name="Suzuki S."/>
            <person name="Arashida R."/>
            <person name="Nakata D."/>
            <person name="Miyata S."/>
            <person name="Ugaki M."/>
            <person name="Namba S."/>
        </authorList>
    </citation>
    <scope>NUCLEOTIDE SEQUENCE [LARGE SCALE GENOMIC DNA]</scope>
    <source>
        <strain>OY-M</strain>
    </source>
</reference>
<dbReference type="EC" id="2.7.4.3" evidence="1"/>
<dbReference type="EMBL" id="AP006628">
    <property type="protein sequence ID" value="BAD04306.1"/>
    <property type="molecule type" value="Genomic_DNA"/>
</dbReference>
<dbReference type="SMR" id="Q6YR01"/>
<dbReference type="STRING" id="262768.PAM_221"/>
<dbReference type="KEGG" id="poy:PAM_221"/>
<dbReference type="eggNOG" id="COG0563">
    <property type="taxonomic scope" value="Bacteria"/>
</dbReference>
<dbReference type="HOGENOM" id="CLU_032354_1_2_14"/>
<dbReference type="BioCyc" id="OYEL262768:G1G26-267-MONOMER"/>
<dbReference type="UniPathway" id="UPA00588">
    <property type="reaction ID" value="UER00649"/>
</dbReference>
<dbReference type="Proteomes" id="UP000002523">
    <property type="component" value="Chromosome"/>
</dbReference>
<dbReference type="GO" id="GO:0005737">
    <property type="term" value="C:cytoplasm"/>
    <property type="evidence" value="ECO:0007669"/>
    <property type="project" value="UniProtKB-SubCell"/>
</dbReference>
<dbReference type="GO" id="GO:0004017">
    <property type="term" value="F:adenylate kinase activity"/>
    <property type="evidence" value="ECO:0007669"/>
    <property type="project" value="UniProtKB-UniRule"/>
</dbReference>
<dbReference type="GO" id="GO:0005524">
    <property type="term" value="F:ATP binding"/>
    <property type="evidence" value="ECO:0007669"/>
    <property type="project" value="UniProtKB-UniRule"/>
</dbReference>
<dbReference type="GO" id="GO:0008270">
    <property type="term" value="F:zinc ion binding"/>
    <property type="evidence" value="ECO:0007669"/>
    <property type="project" value="UniProtKB-UniRule"/>
</dbReference>
<dbReference type="GO" id="GO:0044209">
    <property type="term" value="P:AMP salvage"/>
    <property type="evidence" value="ECO:0007669"/>
    <property type="project" value="UniProtKB-UniRule"/>
</dbReference>
<dbReference type="CDD" id="cd01428">
    <property type="entry name" value="ADK"/>
    <property type="match status" value="1"/>
</dbReference>
<dbReference type="FunFam" id="3.40.50.300:FF:000106">
    <property type="entry name" value="Adenylate kinase mitochondrial"/>
    <property type="match status" value="1"/>
</dbReference>
<dbReference type="Gene3D" id="3.40.50.300">
    <property type="entry name" value="P-loop containing nucleotide triphosphate hydrolases"/>
    <property type="match status" value="1"/>
</dbReference>
<dbReference type="HAMAP" id="MF_00235">
    <property type="entry name" value="Adenylate_kinase_Adk"/>
    <property type="match status" value="1"/>
</dbReference>
<dbReference type="InterPro" id="IPR006259">
    <property type="entry name" value="Adenyl_kin_sub"/>
</dbReference>
<dbReference type="InterPro" id="IPR000850">
    <property type="entry name" value="Adenylat/UMP-CMP_kin"/>
</dbReference>
<dbReference type="InterPro" id="IPR033690">
    <property type="entry name" value="Adenylat_kinase_CS"/>
</dbReference>
<dbReference type="InterPro" id="IPR007862">
    <property type="entry name" value="Adenylate_kinase_lid-dom"/>
</dbReference>
<dbReference type="InterPro" id="IPR027417">
    <property type="entry name" value="P-loop_NTPase"/>
</dbReference>
<dbReference type="NCBIfam" id="TIGR01351">
    <property type="entry name" value="adk"/>
    <property type="match status" value="1"/>
</dbReference>
<dbReference type="NCBIfam" id="NF001380">
    <property type="entry name" value="PRK00279.1-2"/>
    <property type="match status" value="1"/>
</dbReference>
<dbReference type="NCBIfam" id="NF001381">
    <property type="entry name" value="PRK00279.1-3"/>
    <property type="match status" value="1"/>
</dbReference>
<dbReference type="PANTHER" id="PTHR23359">
    <property type="entry name" value="NUCLEOTIDE KINASE"/>
    <property type="match status" value="1"/>
</dbReference>
<dbReference type="Pfam" id="PF00406">
    <property type="entry name" value="ADK"/>
    <property type="match status" value="1"/>
</dbReference>
<dbReference type="Pfam" id="PF05191">
    <property type="entry name" value="ADK_lid"/>
    <property type="match status" value="1"/>
</dbReference>
<dbReference type="PRINTS" id="PR00094">
    <property type="entry name" value="ADENYLTKNASE"/>
</dbReference>
<dbReference type="SUPFAM" id="SSF52540">
    <property type="entry name" value="P-loop containing nucleoside triphosphate hydrolases"/>
    <property type="match status" value="1"/>
</dbReference>
<dbReference type="PROSITE" id="PS00113">
    <property type="entry name" value="ADENYLATE_KINASE"/>
    <property type="match status" value="1"/>
</dbReference>
<evidence type="ECO:0000255" key="1">
    <source>
        <dbReference type="HAMAP-Rule" id="MF_00235"/>
    </source>
</evidence>